<keyword id="KW-0067">ATP-binding</keyword>
<keyword id="KW-1003">Cell membrane</keyword>
<keyword id="KW-0134">Cell wall</keyword>
<keyword id="KW-0963">Cytoplasm</keyword>
<keyword id="KW-0418">Kinase</keyword>
<keyword id="KW-0460">Magnesium</keyword>
<keyword id="KW-0472">Membrane</keyword>
<keyword id="KW-0479">Metal-binding</keyword>
<keyword id="KW-0547">Nucleotide-binding</keyword>
<keyword id="KW-0597">Phosphoprotein</keyword>
<keyword id="KW-1185">Reference proteome</keyword>
<keyword id="KW-0964">Secreted</keyword>
<keyword id="KW-0723">Serine/threonine-protein kinase</keyword>
<keyword id="KW-0808">Transferase</keyword>
<keyword id="KW-0843">Virulence</keyword>
<protein>
    <recommendedName>
        <fullName>Serine/threonine-protein kinase PknK</fullName>
        <ecNumber>2.7.11.1</ecNumber>
    </recommendedName>
    <alternativeName>
        <fullName>Protein kinase K</fullName>
    </alternativeName>
</protein>
<name>PKNK_MYCTO</name>
<feature type="chain" id="PRO_0000428061" description="Serine/threonine-protein kinase PknK">
    <location>
        <begin position="1"/>
        <end position="1110"/>
    </location>
</feature>
<feature type="domain" description="Protein kinase" evidence="2">
    <location>
        <begin position="26"/>
        <end position="283"/>
    </location>
</feature>
<feature type="region of interest" description="Disordered" evidence="3">
    <location>
        <begin position="308"/>
        <end position="343"/>
    </location>
</feature>
<feature type="active site" description="Proton acceptor" evidence="2">
    <location>
        <position position="149"/>
    </location>
</feature>
<feature type="binding site" evidence="2">
    <location>
        <begin position="32"/>
        <end position="40"/>
    </location>
    <ligand>
        <name>ATP</name>
        <dbReference type="ChEBI" id="CHEBI:30616"/>
    </ligand>
</feature>
<feature type="binding site" evidence="2">
    <location>
        <position position="55"/>
    </location>
    <ligand>
        <name>ATP</name>
        <dbReference type="ChEBI" id="CHEBI:30616"/>
    </ligand>
</feature>
<feature type="binding site" evidence="1">
    <location>
        <position position="154"/>
    </location>
    <ligand>
        <name>Mg(2+)</name>
        <dbReference type="ChEBI" id="CHEBI:18420"/>
    </ligand>
</feature>
<feature type="binding site" evidence="1">
    <location>
        <position position="167"/>
    </location>
    <ligand>
        <name>Mg(2+)</name>
        <dbReference type="ChEBI" id="CHEBI:18420"/>
    </ligand>
</feature>
<feature type="modified residue" description="Phosphothreonine; by autocatalysis" evidence="1">
    <location>
        <position position="179"/>
    </location>
</feature>
<feature type="modified residue" description="Phosphothreonine; by autocatalysis" evidence="1">
    <location>
        <position position="181"/>
    </location>
</feature>
<comment type="function">
    <text evidence="1">Key microbial factor involved in regulation of early and late events in tuberculosis infection, and in host-pathogen interactions.</text>
</comment>
<comment type="catalytic activity">
    <reaction>
        <text>L-seryl-[protein] + ATP = O-phospho-L-seryl-[protein] + ADP + H(+)</text>
        <dbReference type="Rhea" id="RHEA:17989"/>
        <dbReference type="Rhea" id="RHEA-COMP:9863"/>
        <dbReference type="Rhea" id="RHEA-COMP:11604"/>
        <dbReference type="ChEBI" id="CHEBI:15378"/>
        <dbReference type="ChEBI" id="CHEBI:29999"/>
        <dbReference type="ChEBI" id="CHEBI:30616"/>
        <dbReference type="ChEBI" id="CHEBI:83421"/>
        <dbReference type="ChEBI" id="CHEBI:456216"/>
        <dbReference type="EC" id="2.7.11.1"/>
    </reaction>
</comment>
<comment type="catalytic activity">
    <reaction>
        <text>L-threonyl-[protein] + ATP = O-phospho-L-threonyl-[protein] + ADP + H(+)</text>
        <dbReference type="Rhea" id="RHEA:46608"/>
        <dbReference type="Rhea" id="RHEA-COMP:11060"/>
        <dbReference type="Rhea" id="RHEA-COMP:11605"/>
        <dbReference type="ChEBI" id="CHEBI:15378"/>
        <dbReference type="ChEBI" id="CHEBI:30013"/>
        <dbReference type="ChEBI" id="CHEBI:30616"/>
        <dbReference type="ChEBI" id="CHEBI:61977"/>
        <dbReference type="ChEBI" id="CHEBI:456216"/>
        <dbReference type="EC" id="2.7.11.1"/>
    </reaction>
</comment>
<comment type="subunit">
    <text evidence="1">Forms oligomeric complexes in solution.</text>
</comment>
<comment type="subcellular location">
    <subcellularLocation>
        <location evidence="1">Cytoplasm</location>
    </subcellularLocation>
    <subcellularLocation>
        <location evidence="1">Cell membrane</location>
    </subcellularLocation>
    <subcellularLocation>
        <location>Secreted</location>
        <location>Cell wall</location>
    </subcellularLocation>
    <text evidence="1">Probably attached to the cell membrane through interactions mediated by its C-terminal region. May be secreted during infection (By similarity).</text>
</comment>
<comment type="PTM">
    <text evidence="1">Can autophosphorylate the carboxyl terminal region in addition to Thr-179 and Thr-181.</text>
</comment>
<comment type="similarity">
    <text evidence="2">Belongs to the protein kinase superfamily. Ser/Thr protein kinase family.</text>
</comment>
<gene>
    <name type="primary">pknK</name>
    <name type="ordered locus">MT3165</name>
</gene>
<evidence type="ECO:0000250" key="1"/>
<evidence type="ECO:0000255" key="2">
    <source>
        <dbReference type="PROSITE-ProRule" id="PRU00159"/>
    </source>
</evidence>
<evidence type="ECO:0000256" key="3">
    <source>
        <dbReference type="SAM" id="MobiDB-lite"/>
    </source>
</evidence>
<sequence>MTDVDPHATRRDLVPNIPAELLEAGFDNVEEIGRGGFGVVYRCVQPSLDRAVAVKVLSTDLDRDNLERFLREQRAMGRLSGHPHIVTVLQVGVLAGGRPFIVMPYHAKNSLETLIRRHGPLDWRETLSIGVKLAGALEAAHRVGTLHRDVKPGNILLTDYGEPQLTDFGIARIAGGFETATGVIAGSPAFTAPEVLEGASPTPASDVYSLGATLFCALTGHAAYERRSGERVIAQFLRITSQPIPDLRKQGLPADVAAAIERAMARHPADRPATAADVGEELRDVQRRNGVSVDEMPLPVELGVERRRSPEAHAAHRHTGGGTPTVPTPPTPATKYRPSVPTGSLVTRSRLTDILRAGGRRRLILIHAPSGFGKSTLAAQWREELSRDGAAVAWLTIDNDDNNEVWFLSHLLESIRRVRPTLAESLGHVLEEHGDDAGRYVLTSLIDEIHENDDRIAVVIDDWHRVSDSRTQAALGFLLDNGCHHLQLIVTSWSRAGLPVGRLRIGDELAEIDSAALRFDTDEAAALLNDAGGLRLPRADVQALTTSTDGWAAALRLAALSLRGGGDATQLLRGLSGASDVIHEFLSENVLDTLEPELREFLLVASVTERTCGGLASALAGITNGRAMLEEAEHRGLFLQRTEDDPNWFRFHQMFADFLHRRLERGGSHRVAELHRRASAWFAENGYLHEAVDHALAAGDPARAVDLVEQDETNLPEQSKMTTLLAIVQKLPTSMVVSRARLQLAIAWANILLQRPAPATGALNRFETALGRAELPEATQADLRAEADVLRAVAEVFADRVERVDDLLAEAMSRPDTLPPRVPGTAGNTAALAAICRFEFAEVYPLLDWAAPYQEMMGPFGTVYAQCLRGMAARNRLDIVAALQNFRTAFEVGTAVGAHSHAARLAGSLLAELLYETGDLAGAGRLMDESYLLGSEGGAVDYLAARYVIGARVKAAQGDHEGAADRLSTGGDTAVQLGLPRLAARINNERIRLGIALPAAVAADLLAPRTIPRDNGIATMTAELDEDSAVRLLSAGDSADRDQACQRAGALAAAIDGTRRPLAALQAQILHIETLAATGRESDARNELAPVATKCAELGLSRLLVDAGLA</sequence>
<accession>P9WI64</accession>
<accession>L0TEA2</accession>
<accession>P95078</accession>
<dbReference type="EC" id="2.7.11.1"/>
<dbReference type="EMBL" id="AE000516">
    <property type="protein sequence ID" value="AAK47501.1"/>
    <property type="molecule type" value="Genomic_DNA"/>
</dbReference>
<dbReference type="PIR" id="A70652">
    <property type="entry name" value="A70652"/>
</dbReference>
<dbReference type="RefSeq" id="WP_003899905.1">
    <property type="nucleotide sequence ID" value="NZ_KK341227.1"/>
</dbReference>
<dbReference type="SMR" id="P9WI64"/>
<dbReference type="KEGG" id="mtc:MT3165"/>
<dbReference type="PATRIC" id="fig|83331.31.peg.3411"/>
<dbReference type="HOGENOM" id="CLU_006325_2_0_11"/>
<dbReference type="Proteomes" id="UP000001020">
    <property type="component" value="Chromosome"/>
</dbReference>
<dbReference type="GO" id="GO:0005737">
    <property type="term" value="C:cytoplasm"/>
    <property type="evidence" value="ECO:0007669"/>
    <property type="project" value="UniProtKB-SubCell"/>
</dbReference>
<dbReference type="GO" id="GO:0005576">
    <property type="term" value="C:extracellular region"/>
    <property type="evidence" value="ECO:0007669"/>
    <property type="project" value="UniProtKB-KW"/>
</dbReference>
<dbReference type="GO" id="GO:0005886">
    <property type="term" value="C:plasma membrane"/>
    <property type="evidence" value="ECO:0007669"/>
    <property type="project" value="UniProtKB-SubCell"/>
</dbReference>
<dbReference type="GO" id="GO:0005524">
    <property type="term" value="F:ATP binding"/>
    <property type="evidence" value="ECO:0007669"/>
    <property type="project" value="UniProtKB-KW"/>
</dbReference>
<dbReference type="GO" id="GO:0046872">
    <property type="term" value="F:metal ion binding"/>
    <property type="evidence" value="ECO:0007669"/>
    <property type="project" value="UniProtKB-KW"/>
</dbReference>
<dbReference type="GO" id="GO:0106310">
    <property type="term" value="F:protein serine kinase activity"/>
    <property type="evidence" value="ECO:0007669"/>
    <property type="project" value="RHEA"/>
</dbReference>
<dbReference type="GO" id="GO:0004674">
    <property type="term" value="F:protein serine/threonine kinase activity"/>
    <property type="evidence" value="ECO:0007669"/>
    <property type="project" value="UniProtKB-KW"/>
</dbReference>
<dbReference type="CDD" id="cd14014">
    <property type="entry name" value="STKc_PknB_like"/>
    <property type="match status" value="1"/>
</dbReference>
<dbReference type="FunFam" id="3.40.50.300:FF:002867">
    <property type="entry name" value="Serine/threonine-protein kinase PknK"/>
    <property type="match status" value="1"/>
</dbReference>
<dbReference type="Gene3D" id="3.40.50.300">
    <property type="entry name" value="P-loop containing nucleotide triphosphate hydrolases"/>
    <property type="match status" value="1"/>
</dbReference>
<dbReference type="Gene3D" id="3.30.200.20">
    <property type="entry name" value="Phosphorylase Kinase, domain 1"/>
    <property type="match status" value="1"/>
</dbReference>
<dbReference type="Gene3D" id="1.10.510.10">
    <property type="entry name" value="Transferase(Phosphotransferase) domain 1"/>
    <property type="match status" value="1"/>
</dbReference>
<dbReference type="InterPro" id="IPR041664">
    <property type="entry name" value="AAA_16"/>
</dbReference>
<dbReference type="InterPro" id="IPR011009">
    <property type="entry name" value="Kinase-like_dom_sf"/>
</dbReference>
<dbReference type="InterPro" id="IPR027417">
    <property type="entry name" value="P-loop_NTPase"/>
</dbReference>
<dbReference type="InterPro" id="IPR000719">
    <property type="entry name" value="Prot_kinase_dom"/>
</dbReference>
<dbReference type="InterPro" id="IPR017441">
    <property type="entry name" value="Protein_kinase_ATP_BS"/>
</dbReference>
<dbReference type="InterPro" id="IPR016236">
    <property type="entry name" value="Ser/Thr_kinase_PknK_prd"/>
</dbReference>
<dbReference type="PANTHER" id="PTHR43289">
    <property type="entry name" value="MITOGEN-ACTIVATED PROTEIN KINASE KINASE KINASE 20-RELATED"/>
    <property type="match status" value="1"/>
</dbReference>
<dbReference type="PANTHER" id="PTHR43289:SF6">
    <property type="entry name" value="SERINE_THREONINE-PROTEIN KINASE NEKL-3"/>
    <property type="match status" value="1"/>
</dbReference>
<dbReference type="Pfam" id="PF13191">
    <property type="entry name" value="AAA_16"/>
    <property type="match status" value="1"/>
</dbReference>
<dbReference type="Pfam" id="PF00069">
    <property type="entry name" value="Pkinase"/>
    <property type="match status" value="1"/>
</dbReference>
<dbReference type="PIRSF" id="PIRSF000574">
    <property type="entry name" value="Ser/Thr_PK_PknK_prd"/>
    <property type="match status" value="1"/>
</dbReference>
<dbReference type="SMART" id="SM00220">
    <property type="entry name" value="S_TKc"/>
    <property type="match status" value="1"/>
</dbReference>
<dbReference type="SUPFAM" id="SSF52540">
    <property type="entry name" value="P-loop containing nucleoside triphosphate hydrolases"/>
    <property type="match status" value="1"/>
</dbReference>
<dbReference type="SUPFAM" id="SSF56112">
    <property type="entry name" value="Protein kinase-like (PK-like)"/>
    <property type="match status" value="1"/>
</dbReference>
<dbReference type="PROSITE" id="PS00107">
    <property type="entry name" value="PROTEIN_KINASE_ATP"/>
    <property type="match status" value="1"/>
</dbReference>
<dbReference type="PROSITE" id="PS50011">
    <property type="entry name" value="PROTEIN_KINASE_DOM"/>
    <property type="match status" value="1"/>
</dbReference>
<organism>
    <name type="scientific">Mycobacterium tuberculosis (strain CDC 1551 / Oshkosh)</name>
    <dbReference type="NCBI Taxonomy" id="83331"/>
    <lineage>
        <taxon>Bacteria</taxon>
        <taxon>Bacillati</taxon>
        <taxon>Actinomycetota</taxon>
        <taxon>Actinomycetes</taxon>
        <taxon>Mycobacteriales</taxon>
        <taxon>Mycobacteriaceae</taxon>
        <taxon>Mycobacterium</taxon>
        <taxon>Mycobacterium tuberculosis complex</taxon>
    </lineage>
</organism>
<proteinExistence type="inferred from homology"/>
<reference key="1">
    <citation type="journal article" date="2002" name="J. Bacteriol.">
        <title>Whole-genome comparison of Mycobacterium tuberculosis clinical and laboratory strains.</title>
        <authorList>
            <person name="Fleischmann R.D."/>
            <person name="Alland D."/>
            <person name="Eisen J.A."/>
            <person name="Carpenter L."/>
            <person name="White O."/>
            <person name="Peterson J.D."/>
            <person name="DeBoy R.T."/>
            <person name="Dodson R.J."/>
            <person name="Gwinn M.L."/>
            <person name="Haft D.H."/>
            <person name="Hickey E.K."/>
            <person name="Kolonay J.F."/>
            <person name="Nelson W.C."/>
            <person name="Umayam L.A."/>
            <person name="Ermolaeva M.D."/>
            <person name="Salzberg S.L."/>
            <person name="Delcher A."/>
            <person name="Utterback T.R."/>
            <person name="Weidman J.F."/>
            <person name="Khouri H.M."/>
            <person name="Gill J."/>
            <person name="Mikula A."/>
            <person name="Bishai W."/>
            <person name="Jacobs W.R. Jr."/>
            <person name="Venter J.C."/>
            <person name="Fraser C.M."/>
        </authorList>
    </citation>
    <scope>NUCLEOTIDE SEQUENCE [LARGE SCALE GENOMIC DNA]</scope>
    <source>
        <strain>CDC 1551 / Oshkosh</strain>
    </source>
</reference>